<feature type="signal peptide" evidence="1">
    <location>
        <begin position="1"/>
        <end position="17"/>
    </location>
</feature>
<feature type="chain" id="PRO_0000186461" description="SCO-spondin">
    <location>
        <begin position="18"/>
        <end position="5146"/>
    </location>
</feature>
<feature type="domain" description="EMI">
    <location>
        <begin position="18"/>
        <end position="94"/>
    </location>
</feature>
<feature type="domain" description="VWFD 1" evidence="7">
    <location>
        <begin position="185"/>
        <end position="356"/>
    </location>
</feature>
<feature type="domain" description="TIL 1" evidence="1">
    <location>
        <begin position="464"/>
        <end position="519"/>
    </location>
</feature>
<feature type="domain" description="VWFD 2" evidence="7">
    <location>
        <begin position="557"/>
        <end position="730"/>
    </location>
</feature>
<feature type="domain" description="TIL 2" evidence="1">
    <location>
        <begin position="822"/>
        <end position="875"/>
    </location>
</feature>
<feature type="domain" description="VWFD 3" evidence="7">
    <location>
        <begin position="1008"/>
        <end position="1178"/>
    </location>
</feature>
<feature type="domain" description="TIL 3" evidence="1">
    <location>
        <begin position="1271"/>
        <end position="1327"/>
    </location>
</feature>
<feature type="domain" description="LDL-receptor class A 1" evidence="4">
    <location>
        <begin position="1372"/>
        <end position="1409"/>
    </location>
</feature>
<feature type="domain" description="LDL-receptor class A 2" evidence="4">
    <location>
        <begin position="1412"/>
        <end position="1447"/>
    </location>
</feature>
<feature type="domain" description="LDL-receptor class A 3" evidence="4">
    <location>
        <begin position="1448"/>
        <end position="1484"/>
    </location>
</feature>
<feature type="domain" description="LDL-receptor class A 4" evidence="4">
    <location>
        <begin position="1488"/>
        <end position="1526"/>
    </location>
</feature>
<feature type="domain" description="LDL-receptor class A 5" evidence="4">
    <location>
        <begin position="1561"/>
        <end position="1597"/>
    </location>
</feature>
<feature type="domain" description="LDL-receptor class A 6" evidence="4">
    <location>
        <begin position="1599"/>
        <end position="1638"/>
    </location>
</feature>
<feature type="domain" description="LDL-receptor class A 7" evidence="4">
    <location>
        <begin position="1652"/>
        <end position="1690"/>
    </location>
</feature>
<feature type="domain" description="TSP type-1 1" evidence="5">
    <location>
        <begin position="1691"/>
        <end position="1745"/>
    </location>
</feature>
<feature type="domain" description="TSP type-1 2" evidence="5">
    <location>
        <begin position="1747"/>
        <end position="1805"/>
    </location>
</feature>
<feature type="domain" description="TIL 4" evidence="1">
    <location>
        <begin position="1809"/>
        <end position="1865"/>
    </location>
</feature>
<feature type="domain" description="EGF-like 1">
    <location>
        <begin position="1821"/>
        <end position="1860"/>
    </location>
</feature>
<feature type="domain" description="EGF-like 2">
    <location>
        <begin position="1861"/>
        <end position="1898"/>
    </location>
</feature>
<feature type="domain" description="TSP type-1 3" evidence="5">
    <location>
        <begin position="1906"/>
        <end position="1962"/>
    </location>
</feature>
<feature type="domain" description="VWFC 1" evidence="6">
    <location>
        <begin position="1962"/>
        <end position="2022"/>
    </location>
</feature>
<feature type="domain" description="F5/8 type C" evidence="3">
    <location>
        <begin position="2062"/>
        <end position="2220"/>
    </location>
</feature>
<feature type="domain" description="LDL-receptor class A 8" evidence="4">
    <location>
        <begin position="2225"/>
        <end position="2261"/>
    </location>
</feature>
<feature type="domain" description="LDL-receptor class A 9" evidence="4">
    <location>
        <begin position="2382"/>
        <end position="2418"/>
    </location>
</feature>
<feature type="domain" description="LDL-receptor class A 10" evidence="4">
    <location>
        <begin position="2442"/>
        <end position="2478"/>
    </location>
</feature>
<feature type="domain" description="TSP type-1 4" evidence="5">
    <location>
        <begin position="2479"/>
        <end position="2532"/>
    </location>
</feature>
<feature type="domain" description="TSP type-1 5" evidence="5">
    <location>
        <begin position="2534"/>
        <end position="2589"/>
    </location>
</feature>
<feature type="domain" description="TIL 5" evidence="1">
    <location>
        <begin position="2611"/>
        <end position="2654"/>
    </location>
</feature>
<feature type="domain" description="TSP type-1 6" evidence="5">
    <location>
        <begin position="2694"/>
        <end position="2748"/>
    </location>
</feature>
<feature type="domain" description="TSP type-1 7" evidence="5">
    <location>
        <begin position="2751"/>
        <end position="2807"/>
    </location>
</feature>
<feature type="domain" description="TSP type-1 8" evidence="5">
    <location>
        <begin position="2809"/>
        <end position="2862"/>
    </location>
</feature>
<feature type="domain" description="TSP type-1 9" evidence="5">
    <location>
        <begin position="2964"/>
        <end position="3019"/>
    </location>
</feature>
<feature type="domain" description="TSP type-1 10" evidence="5">
    <location>
        <begin position="3020"/>
        <end position="3071"/>
    </location>
</feature>
<feature type="domain" description="TIL 6" evidence="1">
    <location>
        <begin position="3070"/>
        <end position="3122"/>
    </location>
</feature>
<feature type="domain" description="TSP type-1 11" evidence="5">
    <location>
        <begin position="3163"/>
        <end position="3230"/>
    </location>
</feature>
<feature type="domain" description="TSP type-1 12" evidence="5">
    <location>
        <begin position="3232"/>
        <end position="3287"/>
    </location>
</feature>
<feature type="domain" description="TIL 7" evidence="1">
    <location>
        <begin position="3295"/>
        <end position="3345"/>
    </location>
</feature>
<feature type="domain" description="TSP type-1 13" evidence="5">
    <location>
        <begin position="3388"/>
        <end position="3450"/>
    </location>
</feature>
<feature type="domain" description="TSP type-1 14" evidence="5">
    <location>
        <begin position="3452"/>
        <end position="3507"/>
    </location>
</feature>
<feature type="domain" description="TSP type-1 15" evidence="5">
    <location>
        <begin position="3626"/>
        <end position="3674"/>
    </location>
</feature>
<feature type="domain" description="TSP type-1 16" evidence="5">
    <location>
        <begin position="3802"/>
        <end position="3858"/>
    </location>
</feature>
<feature type="domain" description="TSP type-1 17" evidence="5">
    <location>
        <begin position="3872"/>
        <end position="3924"/>
    </location>
</feature>
<feature type="domain" description="TSP type-1 18" evidence="5">
    <location>
        <begin position="3938"/>
        <end position="3994"/>
    </location>
</feature>
<feature type="domain" description="TSP type-1 19" evidence="5">
    <location>
        <begin position="3996"/>
        <end position="4051"/>
    </location>
</feature>
<feature type="domain" description="TIL 8" evidence="1">
    <location>
        <begin position="4054"/>
        <end position="4109"/>
    </location>
</feature>
<feature type="domain" description="VWFC 2" evidence="6">
    <location>
        <begin position="4101"/>
        <end position="4168"/>
    </location>
</feature>
<feature type="domain" description="TSP type-1 20" evidence="5">
    <location>
        <begin position="4151"/>
        <end position="4204"/>
    </location>
</feature>
<feature type="domain" description="TSP type-1 21" evidence="5">
    <location>
        <begin position="4245"/>
        <end position="4300"/>
    </location>
</feature>
<feature type="domain" description="TSP type-1 22" evidence="5">
    <location>
        <begin position="4302"/>
        <end position="4358"/>
    </location>
</feature>
<feature type="domain" description="TSP type-1 23" evidence="5">
    <location>
        <begin position="4360"/>
        <end position="4414"/>
    </location>
</feature>
<feature type="domain" description="TIL 9" evidence="1">
    <location>
        <begin position="4418"/>
        <end position="4473"/>
    </location>
</feature>
<feature type="domain" description="TSP type-1 24" evidence="5">
    <location>
        <begin position="4610"/>
        <end position="4661"/>
    </location>
</feature>
<feature type="domain" description="TIL 10" evidence="1">
    <location>
        <begin position="4675"/>
        <end position="4721"/>
    </location>
</feature>
<feature type="domain" description="TSP type-1 25" evidence="5">
    <location>
        <begin position="4761"/>
        <end position="4814"/>
    </location>
</feature>
<feature type="domain" description="TIL 11" evidence="1">
    <location>
        <begin position="4816"/>
        <end position="4870"/>
    </location>
</feature>
<feature type="domain" description="VWFC 3" evidence="6">
    <location>
        <begin position="4983"/>
        <end position="5041"/>
    </location>
</feature>
<feature type="domain" description="CTCK" evidence="2">
    <location>
        <begin position="5052"/>
        <end position="5139"/>
    </location>
</feature>
<feature type="region of interest" description="Disordered" evidence="8">
    <location>
        <begin position="2262"/>
        <end position="2346"/>
    </location>
</feature>
<feature type="compositionally biased region" description="Polar residues" evidence="8">
    <location>
        <begin position="2273"/>
        <end position="2284"/>
    </location>
</feature>
<feature type="compositionally biased region" description="Polar residues" evidence="8">
    <location>
        <begin position="2331"/>
        <end position="2343"/>
    </location>
</feature>
<feature type="glycosylation site" description="N-linked (GlcNAc...) asparagine" evidence="1">
    <location>
        <position position="80"/>
    </location>
</feature>
<feature type="glycosylation site" description="N-linked (GlcNAc...) asparagine" evidence="1">
    <location>
        <position position="122"/>
    </location>
</feature>
<feature type="glycosylation site" description="N-linked (GlcNAc...) asparagine" evidence="1">
    <location>
        <position position="153"/>
    </location>
</feature>
<feature type="glycosylation site" description="N-linked (GlcNAc...) asparagine" evidence="1">
    <location>
        <position position="255"/>
    </location>
</feature>
<feature type="glycosylation site" description="N-linked (GlcNAc...) asparagine" evidence="1">
    <location>
        <position position="814"/>
    </location>
</feature>
<feature type="glycosylation site" description="N-linked (GlcNAc...) asparagine" evidence="1">
    <location>
        <position position="906"/>
    </location>
</feature>
<feature type="glycosylation site" description="N-linked (GlcNAc...) asparagine" evidence="1">
    <location>
        <position position="1349"/>
    </location>
</feature>
<feature type="glycosylation site" description="N-linked (GlcNAc...) asparagine" evidence="1">
    <location>
        <position position="1647"/>
    </location>
</feature>
<feature type="glycosylation site" description="N-linked (GlcNAc...) asparagine" evidence="1">
    <location>
        <position position="1806"/>
    </location>
</feature>
<feature type="glycosylation site" description="N-linked (GlcNAc...) asparagine" evidence="1">
    <location>
        <position position="2027"/>
    </location>
</feature>
<feature type="glycosylation site" description="N-linked (GlcNAc...) asparagine" evidence="1">
    <location>
        <position position="2127"/>
    </location>
</feature>
<feature type="glycosylation site" description="N-linked (GlcNAc...) asparagine" evidence="1">
    <location>
        <position position="2624"/>
    </location>
</feature>
<feature type="glycosylation site" description="N-linked (GlcNAc...) asparagine" evidence="1">
    <location>
        <position position="2673"/>
    </location>
</feature>
<feature type="glycosylation site" description="N-linked (GlcNAc...) asparagine" evidence="1">
    <location>
        <position position="2915"/>
    </location>
</feature>
<feature type="glycosylation site" description="N-linked (GlcNAc...) asparagine" evidence="1">
    <location>
        <position position="2946"/>
    </location>
</feature>
<feature type="glycosylation site" description="N-linked (GlcNAc...) asparagine" evidence="1">
    <location>
        <position position="3041"/>
    </location>
</feature>
<feature type="glycosylation site" description="N-linked (GlcNAc...) asparagine" evidence="1">
    <location>
        <position position="3143"/>
    </location>
</feature>
<feature type="glycosylation site" description="N-linked (GlcNAc...) asparagine" evidence="1">
    <location>
        <position position="3153"/>
    </location>
</feature>
<feature type="glycosylation site" description="N-linked (GlcNAc...) asparagine" evidence="1">
    <location>
        <position position="3290"/>
    </location>
</feature>
<feature type="glycosylation site" description="N-linked (GlcNAc...) asparagine" evidence="1">
    <location>
        <position position="3502"/>
    </location>
</feature>
<feature type="glycosylation site" description="N-linked (GlcNAc...) asparagine" evidence="1">
    <location>
        <position position="3580"/>
    </location>
</feature>
<feature type="glycosylation site" description="N-linked (GlcNAc...) asparagine" evidence="1">
    <location>
        <position position="3607"/>
    </location>
</feature>
<feature type="glycosylation site" description="N-linked (GlcNAc...) asparagine" evidence="1">
    <location>
        <position position="3783"/>
    </location>
</feature>
<feature type="glycosylation site" description="N-linked (GlcNAc...) asparagine" evidence="1">
    <location>
        <position position="3906"/>
    </location>
</feature>
<feature type="glycosylation site" description="N-linked (GlcNAc...) asparagine" evidence="1">
    <location>
        <position position="3938"/>
    </location>
</feature>
<feature type="glycosylation site" description="N-linked (GlcNAc...) asparagine" evidence="1">
    <location>
        <position position="4131"/>
    </location>
</feature>
<feature type="glycosylation site" description="N-linked (GlcNAc...) asparagine" evidence="1">
    <location>
        <position position="4341"/>
    </location>
</feature>
<feature type="glycosylation site" description="N-linked (GlcNAc...) asparagine" evidence="1">
    <location>
        <position position="4412"/>
    </location>
</feature>
<feature type="glycosylation site" description="N-linked (GlcNAc...) asparagine" evidence="1">
    <location>
        <position position="4729"/>
    </location>
</feature>
<feature type="glycosylation site" description="N-linked (GlcNAc...) asparagine" evidence="1">
    <location>
        <position position="4746"/>
    </location>
</feature>
<feature type="glycosylation site" description="N-linked (GlcNAc...) asparagine" evidence="1">
    <location>
        <position position="4751"/>
    </location>
</feature>
<feature type="glycosylation site" description="N-linked (GlcNAc...) asparagine" evidence="1">
    <location>
        <position position="4772"/>
    </location>
</feature>
<feature type="glycosylation site" description="N-linked (GlcNAc...) asparagine" evidence="1">
    <location>
        <position position="4861"/>
    </location>
</feature>
<feature type="glycosylation site" description="N-linked (GlcNAc...) asparagine" evidence="1">
    <location>
        <position position="4901"/>
    </location>
</feature>
<feature type="glycosylation site" description="N-linked (GlcNAc...) asparagine" evidence="1">
    <location>
        <position position="4947"/>
    </location>
</feature>
<feature type="glycosylation site" description="N-linked (GlcNAc...) asparagine" evidence="1">
    <location>
        <position position="4954"/>
    </location>
</feature>
<feature type="glycosylation site" description="N-linked (GlcNAc...) asparagine" evidence="1">
    <location>
        <position position="5060"/>
    </location>
</feature>
<feature type="disulfide bond" evidence="7">
    <location>
        <begin position="187"/>
        <end position="317"/>
    </location>
</feature>
<feature type="disulfide bond" evidence="7">
    <location>
        <begin position="209"/>
        <end position="355"/>
    </location>
</feature>
<feature type="disulfide bond" evidence="7">
    <location>
        <begin position="231"/>
        <end position="237"/>
    </location>
</feature>
<feature type="disulfide bond" evidence="7">
    <location>
        <begin position="559"/>
        <end position="692"/>
    </location>
</feature>
<feature type="disulfide bond" evidence="7">
    <location>
        <begin position="583"/>
        <end position="729"/>
    </location>
</feature>
<feature type="disulfide bond" evidence="7">
    <location>
        <begin position="1010"/>
        <end position="1142"/>
    </location>
</feature>
<feature type="disulfide bond" evidence="7">
    <location>
        <begin position="1032"/>
        <end position="1177"/>
    </location>
</feature>
<feature type="disulfide bond" evidence="7">
    <location>
        <begin position="1053"/>
        <end position="1060"/>
    </location>
</feature>
<feature type="disulfide bond" evidence="4">
    <location>
        <begin position="1373"/>
        <end position="1386"/>
    </location>
</feature>
<feature type="disulfide bond" evidence="4">
    <location>
        <begin position="1380"/>
        <end position="1399"/>
    </location>
</feature>
<feature type="disulfide bond" evidence="4">
    <location>
        <begin position="1393"/>
        <end position="1408"/>
    </location>
</feature>
<feature type="disulfide bond" evidence="4">
    <location>
        <begin position="1413"/>
        <end position="1425"/>
    </location>
</feature>
<feature type="disulfide bond" evidence="4">
    <location>
        <begin position="1420"/>
        <end position="1438"/>
    </location>
</feature>
<feature type="disulfide bond" evidence="4">
    <location>
        <begin position="1432"/>
        <end position="1447"/>
    </location>
</feature>
<feature type="disulfide bond" evidence="4">
    <location>
        <begin position="1449"/>
        <end position="1461"/>
    </location>
</feature>
<feature type="disulfide bond" evidence="4">
    <location>
        <begin position="1456"/>
        <end position="1474"/>
    </location>
</feature>
<feature type="disulfide bond" evidence="4">
    <location>
        <begin position="1468"/>
        <end position="1483"/>
    </location>
</feature>
<feature type="disulfide bond" evidence="4">
    <location>
        <begin position="1489"/>
        <end position="1501"/>
    </location>
</feature>
<feature type="disulfide bond" evidence="4">
    <location>
        <begin position="1496"/>
        <end position="1514"/>
    </location>
</feature>
<feature type="disulfide bond" evidence="4">
    <location>
        <begin position="1508"/>
        <end position="1525"/>
    </location>
</feature>
<feature type="disulfide bond" evidence="4">
    <location>
        <begin position="1562"/>
        <end position="1574"/>
    </location>
</feature>
<feature type="disulfide bond" evidence="4">
    <location>
        <begin position="1569"/>
        <end position="1587"/>
    </location>
</feature>
<feature type="disulfide bond" evidence="4">
    <location>
        <begin position="1581"/>
        <end position="1596"/>
    </location>
</feature>
<feature type="disulfide bond" evidence="4">
    <location>
        <begin position="1600"/>
        <end position="1613"/>
    </location>
</feature>
<feature type="disulfide bond" evidence="4">
    <location>
        <begin position="1607"/>
        <end position="1626"/>
    </location>
</feature>
<feature type="disulfide bond" evidence="4">
    <location>
        <begin position="1620"/>
        <end position="1637"/>
    </location>
</feature>
<feature type="disulfide bond" evidence="5">
    <location>
        <begin position="1703"/>
        <end position="1739"/>
    </location>
</feature>
<feature type="disulfide bond" evidence="5">
    <location>
        <begin position="1707"/>
        <end position="1744"/>
    </location>
</feature>
<feature type="disulfide bond" evidence="5">
    <location>
        <begin position="1718"/>
        <end position="1729"/>
    </location>
</feature>
<feature type="disulfide bond" evidence="5">
    <location>
        <begin position="1907"/>
        <end position="1946"/>
    </location>
</feature>
<feature type="disulfide bond" evidence="5">
    <location>
        <begin position="1918"/>
        <end position="1922"/>
    </location>
</feature>
<feature type="disulfide bond" evidence="5">
    <location>
        <begin position="1956"/>
        <end position="1961"/>
    </location>
</feature>
<feature type="disulfide bond" evidence="3">
    <location>
        <begin position="2062"/>
        <end position="2220"/>
    </location>
</feature>
<feature type="disulfide bond" evidence="4">
    <location>
        <begin position="2226"/>
        <end position="2238"/>
    </location>
</feature>
<feature type="disulfide bond" evidence="4">
    <location>
        <begin position="2233"/>
        <end position="2251"/>
    </location>
</feature>
<feature type="disulfide bond" evidence="4">
    <location>
        <begin position="2245"/>
        <end position="2260"/>
    </location>
</feature>
<feature type="disulfide bond" evidence="4">
    <location>
        <begin position="2383"/>
        <end position="2395"/>
    </location>
</feature>
<feature type="disulfide bond" evidence="4">
    <location>
        <begin position="2390"/>
        <end position="2408"/>
    </location>
</feature>
<feature type="disulfide bond" evidence="4">
    <location>
        <begin position="2402"/>
        <end position="2417"/>
    </location>
</feature>
<feature type="disulfide bond" evidence="4">
    <location>
        <begin position="2443"/>
        <end position="2455"/>
    </location>
</feature>
<feature type="disulfide bond" evidence="4">
    <location>
        <begin position="2450"/>
        <end position="2468"/>
    </location>
</feature>
<feature type="disulfide bond" evidence="4">
    <location>
        <begin position="2462"/>
        <end position="2477"/>
    </location>
</feature>
<feature type="disulfide bond" evidence="5">
    <location>
        <begin position="2480"/>
        <end position="2516"/>
    </location>
</feature>
<feature type="disulfide bond" evidence="5">
    <location>
        <begin position="2491"/>
        <end position="2495"/>
    </location>
</feature>
<feature type="disulfide bond" evidence="5">
    <location>
        <begin position="2526"/>
        <end position="2531"/>
    </location>
</feature>
<feature type="disulfide bond" evidence="5">
    <location>
        <begin position="2546"/>
        <end position="2583"/>
    </location>
</feature>
<feature type="disulfide bond" evidence="5">
    <location>
        <begin position="2550"/>
        <end position="2588"/>
    </location>
</feature>
<feature type="disulfide bond" evidence="5">
    <location>
        <begin position="2561"/>
        <end position="2573"/>
    </location>
</feature>
<feature type="disulfide bond" evidence="5">
    <location>
        <begin position="2695"/>
        <end position="2733"/>
    </location>
</feature>
<feature type="disulfide bond" evidence="5">
    <location>
        <begin position="2706"/>
        <end position="2710"/>
    </location>
</feature>
<feature type="disulfide bond" evidence="5">
    <location>
        <begin position="2743"/>
        <end position="2747"/>
    </location>
</feature>
<feature type="disulfide bond" evidence="5">
    <location>
        <begin position="2763"/>
        <end position="2801"/>
    </location>
</feature>
<feature type="disulfide bond" evidence="5">
    <location>
        <begin position="2767"/>
        <end position="2806"/>
    </location>
</feature>
<feature type="disulfide bond" evidence="5">
    <location>
        <begin position="2783"/>
        <end position="2791"/>
    </location>
</feature>
<feature type="disulfide bond" evidence="5">
    <location>
        <begin position="2821"/>
        <end position="2856"/>
    </location>
</feature>
<feature type="disulfide bond" evidence="5">
    <location>
        <begin position="2825"/>
        <end position="2861"/>
    </location>
</feature>
<feature type="disulfide bond" evidence="5">
    <location>
        <begin position="2836"/>
        <end position="2846"/>
    </location>
</feature>
<feature type="disulfide bond" evidence="5">
    <location>
        <begin position="2965"/>
        <end position="3003"/>
    </location>
</feature>
<feature type="disulfide bond" evidence="5">
    <location>
        <begin position="2976"/>
        <end position="2980"/>
    </location>
</feature>
<feature type="disulfide bond" evidence="5">
    <location>
        <begin position="3013"/>
        <end position="3018"/>
    </location>
</feature>
<feature type="disulfide bond" evidence="5">
    <location>
        <begin position="3175"/>
        <end position="3224"/>
    </location>
</feature>
<feature type="disulfide bond" evidence="5">
    <location>
        <begin position="3179"/>
        <end position="3229"/>
    </location>
</feature>
<feature type="disulfide bond" evidence="5">
    <location>
        <begin position="3190"/>
        <end position="3214"/>
    </location>
</feature>
<feature type="disulfide bond" evidence="5">
    <location>
        <begin position="3244"/>
        <end position="3281"/>
    </location>
</feature>
<feature type="disulfide bond" evidence="5">
    <location>
        <begin position="3248"/>
        <end position="3286"/>
    </location>
</feature>
<feature type="disulfide bond" evidence="5">
    <location>
        <begin position="3259"/>
        <end position="3271"/>
    </location>
</feature>
<feature type="disulfide bond" evidence="5">
    <location>
        <begin position="3400"/>
        <end position="3443"/>
    </location>
</feature>
<feature type="disulfide bond" evidence="5">
    <location>
        <begin position="3404"/>
        <end position="3449"/>
    </location>
</feature>
<feature type="disulfide bond" evidence="5">
    <location>
        <begin position="3415"/>
        <end position="3427"/>
    </location>
</feature>
<feature type="disulfide bond" evidence="5">
    <location>
        <begin position="3464"/>
        <end position="3499"/>
    </location>
</feature>
<feature type="disulfide bond" evidence="5">
    <location>
        <begin position="3467"/>
        <end position="3506"/>
    </location>
</feature>
<feature type="disulfide bond" evidence="5">
    <location>
        <begin position="3477"/>
        <end position="3489"/>
    </location>
</feature>
<feature type="disulfide bond" evidence="5">
    <location>
        <begin position="3638"/>
        <end position="3668"/>
    </location>
</feature>
<feature type="disulfide bond" evidence="5">
    <location>
        <begin position="3642"/>
        <end position="3673"/>
    </location>
</feature>
<feature type="disulfide bond" evidence="5">
    <location>
        <begin position="3653"/>
        <end position="3658"/>
    </location>
</feature>
<feature type="disulfide bond" evidence="5">
    <location>
        <begin position="3814"/>
        <end position="3852"/>
    </location>
</feature>
<feature type="disulfide bond" evidence="5">
    <location>
        <begin position="3818"/>
        <end position="3857"/>
    </location>
</feature>
<feature type="disulfide bond" evidence="5">
    <location>
        <begin position="3830"/>
        <end position="3842"/>
    </location>
</feature>
<feature type="disulfide bond" evidence="5">
    <location>
        <begin position="3939"/>
        <end position="3975"/>
    </location>
</feature>
<feature type="disulfide bond" evidence="5">
    <location>
        <begin position="3950"/>
        <end position="3954"/>
    </location>
</feature>
<feature type="disulfide bond" evidence="5">
    <location>
        <begin position="3988"/>
        <end position="3993"/>
    </location>
</feature>
<feature type="disulfide bond" evidence="5">
    <location>
        <begin position="4008"/>
        <end position="4045"/>
    </location>
</feature>
<feature type="disulfide bond" evidence="5">
    <location>
        <begin position="4012"/>
        <end position="4050"/>
    </location>
</feature>
<feature type="disulfide bond" evidence="5">
    <location>
        <begin position="4023"/>
        <end position="4035"/>
    </location>
</feature>
<feature type="disulfide bond" evidence="5">
    <location>
        <begin position="4152"/>
        <end position="4188"/>
    </location>
</feature>
<feature type="disulfide bond" evidence="5">
    <location>
        <begin position="4163"/>
        <end position="4167"/>
    </location>
</feature>
<feature type="disulfide bond" evidence="5">
    <location>
        <begin position="4198"/>
        <end position="4203"/>
    </location>
</feature>
<feature type="disulfide bond" evidence="5">
    <location>
        <begin position="4257"/>
        <end position="4294"/>
    </location>
</feature>
<feature type="disulfide bond" evidence="5">
    <location>
        <begin position="4261"/>
        <end position="4299"/>
    </location>
</feature>
<feature type="disulfide bond" evidence="5">
    <location>
        <begin position="4272"/>
        <end position="4284"/>
    </location>
</feature>
<feature type="disulfide bond" evidence="5">
    <location>
        <begin position="4361"/>
        <end position="4398"/>
    </location>
</feature>
<feature type="disulfide bond" evidence="5">
    <location>
        <begin position="4372"/>
        <end position="4374"/>
    </location>
</feature>
<feature type="disulfide bond" evidence="5">
    <location>
        <begin position="4408"/>
        <end position="4413"/>
    </location>
</feature>
<feature type="disulfide bond" evidence="5">
    <location>
        <begin position="4611"/>
        <end position="4645"/>
    </location>
</feature>
<feature type="disulfide bond" evidence="5">
    <location>
        <begin position="4622"/>
        <end position="4626"/>
    </location>
</feature>
<feature type="disulfide bond" evidence="5">
    <location>
        <begin position="4655"/>
        <end position="4660"/>
    </location>
</feature>
<feature type="disulfide bond" evidence="5">
    <location>
        <begin position="4773"/>
        <end position="4808"/>
    </location>
</feature>
<feature type="disulfide bond" evidence="5">
    <location>
        <begin position="4777"/>
        <end position="4813"/>
    </location>
</feature>
<feature type="disulfide bond" evidence="5">
    <location>
        <begin position="4788"/>
        <end position="4797"/>
    </location>
</feature>
<feature type="disulfide bond" evidence="2">
    <location>
        <begin position="5052"/>
        <end position="5100"/>
    </location>
</feature>
<feature type="disulfide bond" evidence="2">
    <location>
        <begin position="5066"/>
        <end position="5117"/>
    </location>
</feature>
<feature type="disulfide bond" evidence="2">
    <location>
        <begin position="5076"/>
        <end position="5133"/>
    </location>
</feature>
<feature type="disulfide bond" evidence="2">
    <location>
        <begin position="5080"/>
        <end position="5135"/>
    </location>
</feature>
<reference key="1">
    <citation type="journal article" date="2000" name="Glia">
        <title>Subcommissural organ/Reissner's fiber complex: characterization of SCO-spondin, a glycoprotein with potent activity on neurite outgrowth.</title>
        <authorList>
            <person name="Gobron S."/>
        </authorList>
    </citation>
    <scope>NUCLEOTIDE SEQUENCE [MRNA]</scope>
    <scope>FUNCTION</scope>
    <scope>SUBCELLULAR LOCATION</scope>
    <scope>TISSUE SPECIFICITY</scope>
    <source>
        <tissue>Subcommissural organ</tissue>
    </source>
</reference>
<reference key="2">
    <citation type="journal article" date="1996" name="J. Cell Sci.">
        <title>SCO-spondin: a new member of the thrombospondin family secreted by the subcommissural organ is a candidate in the modulation of neuronal aggregation.</title>
        <authorList>
            <person name="Gobron S."/>
            <person name="Monnerie H."/>
            <person name="Meiniel R."/>
            <person name="Creveaux I."/>
            <person name="Lehmann W."/>
            <person name="Lamalle D."/>
            <person name="Dastugue B."/>
            <person name="Meiniel A."/>
        </authorList>
    </citation>
    <scope>NUCLEOTIDE SEQUENCE [MRNA] OF 1719-2585</scope>
    <scope>FUNCTION</scope>
    <scope>SUBCELLULAR LOCATION</scope>
    <scope>TISSUE SPECIFICITY</scope>
    <scope>DEVELOPMENTAL STAGE</scope>
    <source>
        <tissue>Ependymocyte</tissue>
    </source>
</reference>
<proteinExistence type="evidence at transcript level"/>
<sequence>MLLPALLFGAAWALANGRWCEQTETVLVEEEVTPHQEDLVPCASLQHYQRRGWRLDLTWSGRAGLCAIYKPPETRPAAWNRTVRACCPGWGGTHCTLALAEASPEGHCFATWLCNLGAGSVNASAGSLEECCAQPWGHSWRDGRSQTCHSCSNHSRLGSTPSPAILQPLAGAVAQLWSQRQRPSATCATWSGFHYRTFDGRHFHFLGRCTYLLAGAADATWAVHLQPMGHCPQPGHCQLARVMMGPEEVLIRGENVTVNGRLVPEGASQLLPGLSLQWQGDWLVLSGGLGVVVRLDRSSSVSISVDQELQGQTQGLCGVYNGQPEDDFLEPGRGLAALAATFGNSWRLPDSELGCLDAVEAAQGCEDPLRGTETGTEAGQLRAEAQDVCHQLLEGPFRECHTQVPPAEYHEACLFAYCAGAPAGSGRAERLEAVCATLASYAQDCAARRIAVRWRKPGFCERLCPGGQLYSDCASACPPSCSAVGEGSEWSCGEECVSGCECPPGLFWDGALCVPAARCPCYRRRRRYEPGDTVRQLCNPCECRDGRWLCAQAPCAAECAVGGDGHYVTFDGRSFSFRGRAGCRFILVQDFAKRQLLIVLEHGDCDAGSCLHAISVSLGDTLVQLRDSGVVLVDGQDVALPWSAAGGLSVSRASSSFLLLRWPGARILWGVSDPAAYITLDPHHAHQVQGLCGTFTRNQQDDFLTPAGDVETSITAFASKFQVAGGGTCSLEACTPLSPCSTHTERQVFAEVACAILHGPTFQECHGLVDREAFHLRCLAAVCGCTPGRDCLCPVLAAYARRCAQEGALPSWRNQTFCPVLCPGGQEYQECAPACDRNCGEPEDCGELDNCVAGCNCPLGLLWDPEGQCVPPNLCPCQLGAHRYAPGSATMKDCNHCVCQERGLWNCTAHHCAPPRTFCPRELVYVPGACLLTCDSLDADRTCPPGSPGGCVCPPGTVLLEERCVPPELCPCRHGGQWYLPNAAIQEDCNLCVCQGQQWHCTGQRCDGRCRASGAPHYVTFDGLALTFPGACEYLLVREASGQFMVSAQNLPCGASGLTCTKALTVRLQGTVVHMLRGRAVMVNGVSVTPPKVYSGPGLSLHTAGLFLLLSTRLGLTLLWDGGTRVPVQLSPQLRGRVAGLCGDFDGDASNDLRSRQGVLEPTAELAAHSWRLGPLCPEPGDLPHPCAVNAHRAGWARARCGVVLQPLFARCHVEVPPQQHYEQCVYDACGCDSGGDCECLCSAIATYADECARHGIHVRWRSQELCPLQCERGQVYEACGPTCPATCHDHRPEPGWPCRAVACVEGCFCPEGTLLHGGVCLEPAACPCEWGGSFFPPGTVLQKDCGNNCTCRESQWLCGDDGGRCVEPGPGCAEGETPCRESGHCVPHGWLCDNQDDCGDGSDEEGCATRVCGEGQVSCCSGRCLPLVLLCDGQDDCGDGMDEQGCPCPQDSLTCADGHCLPPARLCDGHPDCPDGADEESCLGQVDCAPGEVSCVDGTCLGAIQLCDGVWDCLDGGDEGPGHCPLPSLPTPPAGTLPGPSAVSWKLHLPPWPVSALRLPCGPLDFACGSGECAPRGWRCDGEEDCADGSDESGCDRPCAPHHAPCARGSHCVAAEQLCDGVPHCPDGSDEDPGACERLQAPGGPNRTGLPCPEYSCPDGLCIGFQQVCDGQPDCELAGTAGPSPEEQGCGAWGPWSPWELCSRTCGPGVQGWSRRCSPPSLPVLWHCPGPERQTRACFAAACPEDGVWTSWSRWSPCSEPCGGVTARHRECHPPQNGGRTCATLPGGPPSTRETRPCPQDGCPNVTCSGELVFHACVPCPLTCDDISGQATCPPDRPCGGPGCWCPAGQVLGAQGRCVWPRQCPCLVDGSRYWPGQRVKTDCQLCVCQDGRPRRCQPSLDCAVNCGWSAWSPWAECLGPCGSRSVQWSFRSPNNPRPAGRGHQCRGLHRKARRCQTEPCEGCEQDGRVHRVGERWRAGPCRVCQCLHDGSARCSPYCPLGSCPQDWVLVEGVGESCCHCVPPGENQTVHPMATPVPAPTPSPQIGAPLITYLLPPPGDPCYSPLGLARLPEGSLPASSQQLEHPAWAAILRPAPGAPGWSPVEHADTQGHTPPPYLQLDLLQPRNLTGIIVQGAGSSDWLQVSSDGLHWHSYRDIQHGTQPAPQLFPKNWNGPSTVWMFARMVQARHVRVWPSDGHHQAAPSSDANLDGPLRVELLGCEPAPLCLGVGHRCVSGECAPRGAPCDGVEDCKDGSDEEGCVTPPAGAGRIESTAWSSAPSSAQPGQLPPQPSEGLAEAEADHWHPGRGSPVPPTGKGPASLGSEPHPSPGGSVQTVTPTSQPEAQALRPEMAAVTVLPPHPMVTPEVPAGRSTTPGPFPHVQCSPGQVPCEVLGCVELEQLCDGREDCLDGSDERPCAWAAGTVPFTVPTTTLPGLPASRDLCSPSQLTCGSGECLPVERRCDLQLDCQDGSDENGCVDCGLAPWSGWSSCSRSCGLGLAFQRRELLRPPLPGGSCPPDRLRSQPCFVQACPVAGAWAEWEAWGPCSVSCGGGHRSRRRSCMDPPPKNGGAPCPGPPQERAPCGLQPCAGGTDCGQGRVHVSAELCRKGLVPPCPPSCLDPEANRSCSGLCLEGCRCPPGLLLQDAGCLPLSECPCLVGEELQQPGVPFLLDNCSRCVCEKGALLCEPGGCPVPCGWSAWSSWGPCDRSCGSGLRARFRSPSNPPAASGGAPCEGQRQELQACYSACGAEVPGWTPWAPWSACSQSCLVPGGGPALRSRSRLCPGPGDTSCIGEATEEEPCSPPVCLGLGVWGQWAAWSACSAPCNGGVQTRGRRCSASAPGDPGCQGPHSQTRDCNTQPCTAQCPGDMVFRSAEQCRWEGGPCPGLCLARGPGVECTGVCTAGCACPTGLFLHNSSCLPPSQCPCQLRGQLYAPGAVARLDSCSNCTCISGEMVCASEPCPVACGWSPWTPWSLCSRSCNVGVRRRFRAGTAPPAAFGGAACQGPNMEAEFCSLRPCGGPAGEWGPWSPCSVPCGGGYRNRTRGSSGPSPVDFSTCGLQPCAGPAPGVCPPGKRWLDCAQGPASCAELSAPRGADQPCHPGCYCPSGMLLLNNACVPTQDCPCTHGGRLHPPGSAVLRPCENCSCVSGLITNCTSWPCKEGQPTWSPWTPWSECSASCGPARRHKHRFCTRPPGGAPSSMAPPLLLSSVPPLCPGPEAEEEPCLLPECDRAGGWGPWGPWSSCSRSCGGGLRSRSRACDQPPPQGLGDYCEGPRAQGAACQALPCPVTNCTAIEGAEYSACGPPCPRSCDDLVHCVWHCQPGCYCPPGQVLSADGTVHVQPGHCSCLDLLTGERHRPGAQLAKPDGCNYCTCSEGQLTCTDLPCPVPGAWCPWSEWTACSQPCQGQTRTRSRACSCPAPQHGGAPCPGEAGEAGAQHQRETCASTPECPVDGAWSPWGPWSPCEVCLGRSHRSRECSWPPTSEGGRPCPGGHRQSRPCQGNSTQCTDCAGGQDLLPCGQPCPRSCEDLSPGVECQPDSMGCQQPRCGCPPGQLSQDGLCVTPSQCRCQYQPGAMGIPENQSRSAGSGLSSWESLEPGEVVTGPCDNCTCVAGILQCQEVPACSGLGLWGSWGPWEDCSVSCGGGEQLRFRRCPRPPCPGPARQSRTCRTQVCREAGCPAGRLYRECQPSEGCPFSCAHVTGQVGCFSAGCEEGCHCPEGTFLHRSACVQECPCVLTALWLQGLGAAGADPGAHLSVLGENGQPLGPGDELGSGQSLRTGCHNCSCAHGKLSCSVEACSKAAGGFSPWGPWGPCSRSCGGLGTRTRSRQCVRPMPAPGGQGCHGPHWDLEYCPSPECPGAAGSTAEPATGLPGGWGLWSPWSPCSGTCTDPAHPAWRSRSRLCLANCTGGAASQERPCNLPSCTELPLCPGPGCEAGNCSWTAWAPWEPCSRSCGVGQQRRLRAYHPPGPGGHWCPDVLTAYQERRFCNLRACPVPGGWSRWSPWSWCDRSCGGGRSLRSRSCSSPPPKNGGAPCVGERHHARLCNPTPCEEGCPAGMEVVSCANRCPRRCSDLQEGIVCQEDQACQQGCRCPEGSLEQDGGCVPLGHCECTDAQGHSWAPGSQHQEACNNCTCRAGQLSCTAQPCPPPAHCAWSRWSAWSPCSRSCGPAGQQSRFRSSTSGSWAPECREEQSQSQPCPQSPCPPLCLQGTRPRSLGDSWLQDGCQQCSCTPEGIICEDAECAGLGAWTPWSPWSDCPVSCGGGNQVRTRVCVASAPPRGGSPCLGPDVQSQRCGLWPCPALPDTCSWGPWGPCSRSCGPGLASRSASCPCLLAEAEPACNSTSPRLDTQACYAGPCLEECVWSSWSSWTRCSCEVLVQQRYRHQRPAPGGAGAGPPCTRLDGHFRPCLTGNCSEDSCAPPFEFQACGSPCTGLCATYLSPWLCQDLPPCQPGCYCPEGLLEQAGGCVPPEQCNCQHVSGEGAGVTLAPGDRLQLGCKECECQRGELQCTSQGCQGLLPLSGWSEWSPCGPCLPLGLLAPASRAALEERWPQDTAGLSPTSAPTLASEQHRHRLCLDPETGRPWAGDPDLCTVPLSQQRLCPDPGACQDLCQWGPWGAWSPCQVPCSGGFRLRWREAGIPPGGGCRGPWAQTESCNMGPCPGESCEAQDTVPTPDCANQCPRSCVDLWDRVECLQGPCRPGCRCPPGQLVQDGHCVPVSSCRCGLPSPNASWALAPAEVVRLDCRNCTCVNGSLACSSHECPTLGPWSAWSNCSAPCGGGTTKRHRSCKEGPGVTPCQAQDMEQQQDCNLQPCPECPPGQVLSACAVSCPRLCSHLQPGTPCMQEPCQLGCDCPRGQLLHNGTCVPPAECPCTQLSLPWGLTLTLEEQHRELPPGTLLTQNCTHCICQGGAFSCSLTDCQECPPGETWQQVAPGELGPCEQTCREPNATETQGNCSGRQAPGCVCQRGHFRSQEGPCVPVDLCECWHHGRPHPPGSEWQKACESCRCVSGESICTQHCPPLTCAQGETAVQEPGGCCPTCRQEAPEEQPVSCRHLTELRNLTKGACYLEQVEVNYCSGHCPSSTNVLPEEPYLQSQCDCCSYRLDPENPVRILNLRCPGGRTELVVLPVIHSCQCSACQGGDFSER</sequence>
<accession>P98167</accession>
<accession>Q8SPM4</accession>
<protein>
    <recommendedName>
        <fullName evidence="11 12">SCO-spondin</fullName>
    </recommendedName>
</protein>
<keyword id="KW-0106">Calcium</keyword>
<keyword id="KW-0130">Cell adhesion</keyword>
<keyword id="KW-1015">Disulfide bond</keyword>
<keyword id="KW-0245">EGF-like domain</keyword>
<keyword id="KW-0325">Glycoprotein</keyword>
<keyword id="KW-1185">Reference proteome</keyword>
<keyword id="KW-0677">Repeat</keyword>
<keyword id="KW-0964">Secreted</keyword>
<keyword id="KW-0732">Signal</keyword>
<evidence type="ECO:0000255" key="1"/>
<evidence type="ECO:0000255" key="2">
    <source>
        <dbReference type="PROSITE-ProRule" id="PRU00039"/>
    </source>
</evidence>
<evidence type="ECO:0000255" key="3">
    <source>
        <dbReference type="PROSITE-ProRule" id="PRU00081"/>
    </source>
</evidence>
<evidence type="ECO:0000255" key="4">
    <source>
        <dbReference type="PROSITE-ProRule" id="PRU00124"/>
    </source>
</evidence>
<evidence type="ECO:0000255" key="5">
    <source>
        <dbReference type="PROSITE-ProRule" id="PRU00210"/>
    </source>
</evidence>
<evidence type="ECO:0000255" key="6">
    <source>
        <dbReference type="PROSITE-ProRule" id="PRU00220"/>
    </source>
</evidence>
<evidence type="ECO:0000255" key="7">
    <source>
        <dbReference type="PROSITE-ProRule" id="PRU00580"/>
    </source>
</evidence>
<evidence type="ECO:0000256" key="8">
    <source>
        <dbReference type="SAM" id="MobiDB-lite"/>
    </source>
</evidence>
<evidence type="ECO:0000269" key="9">
    <source>
    </source>
</evidence>
<evidence type="ECO:0000269" key="10">
    <source>
    </source>
</evidence>
<evidence type="ECO:0000303" key="11">
    <source>
    </source>
</evidence>
<evidence type="ECO:0000303" key="12">
    <source>
    </source>
</evidence>
<evidence type="ECO:0000305" key="13"/>
<gene>
    <name type="primary">SSPO</name>
</gene>
<comment type="function">
    <text evidence="9 10">Involved in the modulation of neuronal aggregation (PubMed:8743952). May be involved in developmental events during the formation of the central nervous system (PubMed:11008217).</text>
</comment>
<comment type="subcellular location">
    <subcellularLocation>
        <location evidence="9 10">Secreted</location>
        <location evidence="9 10">Extracellular space</location>
    </subcellularLocation>
</comment>
<comment type="tissue specificity">
    <text evidence="9 10">Subcommissural organ. Located at the boundary of the diencephalon and mesencephalon beneath the posterior commissure at the point where the axons cross the midline.</text>
</comment>
<comment type="developmental stage">
    <text evidence="10">Embryo.</text>
</comment>
<comment type="similarity">
    <text evidence="13">Belongs to the thrombospondin family.</text>
</comment>
<name>SSPO_BOVIN</name>
<dbReference type="EMBL" id="AJ416457">
    <property type="protein sequence ID" value="CAC94914.1"/>
    <property type="molecule type" value="mRNA"/>
</dbReference>
<dbReference type="EMBL" id="X93922">
    <property type="protein sequence ID" value="CAA63815.1"/>
    <property type="molecule type" value="mRNA"/>
</dbReference>
<dbReference type="RefSeq" id="NP_777131.1">
    <property type="nucleotide sequence ID" value="NM_174706.2"/>
</dbReference>
<dbReference type="SMR" id="P98167"/>
<dbReference type="FunCoup" id="P98167">
    <property type="interactions" value="12"/>
</dbReference>
<dbReference type="STRING" id="9913.ENSBTAP00000041504"/>
<dbReference type="MEROPS" id="I08.954"/>
<dbReference type="GlyCosmos" id="P98167">
    <property type="glycosylation" value="37 sites, No reported glycans"/>
</dbReference>
<dbReference type="GlyGen" id="P98167">
    <property type="glycosylation" value="37 sites"/>
</dbReference>
<dbReference type="PaxDb" id="9913-ENSBTAP00000041504"/>
<dbReference type="GeneID" id="282659"/>
<dbReference type="KEGG" id="bta:282659"/>
<dbReference type="CTD" id="243369"/>
<dbReference type="eggNOG" id="KOG1215">
    <property type="taxonomic scope" value="Eukaryota"/>
</dbReference>
<dbReference type="eggNOG" id="KOG1216">
    <property type="taxonomic scope" value="Eukaryota"/>
</dbReference>
<dbReference type="eggNOG" id="KOG3538">
    <property type="taxonomic scope" value="Eukaryota"/>
</dbReference>
<dbReference type="eggNOG" id="KOG4475">
    <property type="taxonomic scope" value="Eukaryota"/>
</dbReference>
<dbReference type="InParanoid" id="P98167"/>
<dbReference type="OrthoDB" id="6262482at2759"/>
<dbReference type="Proteomes" id="UP000009136">
    <property type="component" value="Unplaced"/>
</dbReference>
<dbReference type="GO" id="GO:0031012">
    <property type="term" value="C:extracellular matrix"/>
    <property type="evidence" value="ECO:0000318"/>
    <property type="project" value="GO_Central"/>
</dbReference>
<dbReference type="GO" id="GO:0005615">
    <property type="term" value="C:extracellular space"/>
    <property type="evidence" value="ECO:0000318"/>
    <property type="project" value="GO_Central"/>
</dbReference>
<dbReference type="GO" id="GO:0030414">
    <property type="term" value="F:peptidase inhibitor activity"/>
    <property type="evidence" value="ECO:0007669"/>
    <property type="project" value="InterPro"/>
</dbReference>
<dbReference type="GO" id="GO:0007155">
    <property type="term" value="P:cell adhesion"/>
    <property type="evidence" value="ECO:0007669"/>
    <property type="project" value="UniProtKB-KW"/>
</dbReference>
<dbReference type="CDD" id="cd00057">
    <property type="entry name" value="FA58C"/>
    <property type="match status" value="1"/>
</dbReference>
<dbReference type="CDD" id="cd00112">
    <property type="entry name" value="LDLa"/>
    <property type="match status" value="9"/>
</dbReference>
<dbReference type="CDD" id="cd19941">
    <property type="entry name" value="TIL"/>
    <property type="match status" value="16"/>
</dbReference>
<dbReference type="FunFam" id="2.10.25.10:FF:000055">
    <property type="entry name" value="alpha-tectorin isoform X1"/>
    <property type="match status" value="3"/>
</dbReference>
<dbReference type="FunFam" id="4.10.400.10:FF:000167">
    <property type="entry name" value="Predicted protein"/>
    <property type="match status" value="1"/>
</dbReference>
<dbReference type="FunFam" id="2.10.25.10:FF:000217">
    <property type="entry name" value="SCO-spondin"/>
    <property type="match status" value="3"/>
</dbReference>
<dbReference type="FunFam" id="2.20.100.10:FF:000080">
    <property type="entry name" value="SCO-spondin"/>
    <property type="match status" value="3"/>
</dbReference>
<dbReference type="FunFam" id="4.10.400.10:FF:000208">
    <property type="entry name" value="SCO-spondin"/>
    <property type="match status" value="1"/>
</dbReference>
<dbReference type="FunFam" id="2.20.100.10:FF:000093">
    <property type="entry name" value="SCO-spondin-like isoform 1"/>
    <property type="match status" value="1"/>
</dbReference>
<dbReference type="FunFam" id="2.20.100.10:FF:000001">
    <property type="entry name" value="semaphorin-5A isoform X1"/>
    <property type="match status" value="4"/>
</dbReference>
<dbReference type="FunFam" id="2.20.100.10:FF:000002">
    <property type="entry name" value="Unc-5 netrin receptor C"/>
    <property type="match status" value="1"/>
</dbReference>
<dbReference type="Gene3D" id="2.10.70.10">
    <property type="entry name" value="Complement Module, domain 1"/>
    <property type="match status" value="1"/>
</dbReference>
<dbReference type="Gene3D" id="2.60.120.260">
    <property type="entry name" value="Galactose-binding domain-like"/>
    <property type="match status" value="1"/>
</dbReference>
<dbReference type="Gene3D" id="2.10.25.10">
    <property type="entry name" value="Laminin"/>
    <property type="match status" value="14"/>
</dbReference>
<dbReference type="Gene3D" id="4.10.400.10">
    <property type="entry name" value="Low-density Lipoprotein Receptor"/>
    <property type="match status" value="9"/>
</dbReference>
<dbReference type="Gene3D" id="2.20.100.10">
    <property type="entry name" value="Thrombospondin type-1 (TSP1) repeat"/>
    <property type="match status" value="25"/>
</dbReference>
<dbReference type="InterPro" id="IPR006207">
    <property type="entry name" value="Cys_knot_C"/>
</dbReference>
<dbReference type="InterPro" id="IPR000421">
    <property type="entry name" value="FA58C"/>
</dbReference>
<dbReference type="InterPro" id="IPR008979">
    <property type="entry name" value="Galactose-bd-like_sf"/>
</dbReference>
<dbReference type="InterPro" id="IPR036055">
    <property type="entry name" value="LDL_receptor-like_sf"/>
</dbReference>
<dbReference type="InterPro" id="IPR023415">
    <property type="entry name" value="LDLR_class-A_CS"/>
</dbReference>
<dbReference type="InterPro" id="IPR002172">
    <property type="entry name" value="LDrepeatLR_classA_rpt"/>
</dbReference>
<dbReference type="InterPro" id="IPR050780">
    <property type="entry name" value="Mucin_vWF_Thrombospondin_sf"/>
</dbReference>
<dbReference type="InterPro" id="IPR036201">
    <property type="entry name" value="Pacifastin_dom_sf"/>
</dbReference>
<dbReference type="InterPro" id="IPR036084">
    <property type="entry name" value="Ser_inhib-like_sf"/>
</dbReference>
<dbReference type="InterPro" id="IPR002919">
    <property type="entry name" value="TIL_dom"/>
</dbReference>
<dbReference type="InterPro" id="IPR000884">
    <property type="entry name" value="TSP1_rpt"/>
</dbReference>
<dbReference type="InterPro" id="IPR036383">
    <property type="entry name" value="TSP1_rpt_sf"/>
</dbReference>
<dbReference type="InterPro" id="IPR014853">
    <property type="entry name" value="VWF/SSPO/ZAN-like_Cys-rich_dom"/>
</dbReference>
<dbReference type="InterPro" id="IPR001007">
    <property type="entry name" value="VWF_dom"/>
</dbReference>
<dbReference type="InterPro" id="IPR001846">
    <property type="entry name" value="VWF_type-D"/>
</dbReference>
<dbReference type="PANTHER" id="PTHR11339">
    <property type="entry name" value="EXTRACELLULAR MATRIX GLYCOPROTEIN RELATED"/>
    <property type="match status" value="1"/>
</dbReference>
<dbReference type="PANTHER" id="PTHR11339:SF396">
    <property type="entry name" value="SCO-SPONDIN"/>
    <property type="match status" value="1"/>
</dbReference>
<dbReference type="Pfam" id="PF08742">
    <property type="entry name" value="C8"/>
    <property type="match status" value="3"/>
</dbReference>
<dbReference type="Pfam" id="PF00754">
    <property type="entry name" value="F5_F8_type_C"/>
    <property type="match status" value="1"/>
</dbReference>
<dbReference type="Pfam" id="PF00057">
    <property type="entry name" value="Ldl_recept_a"/>
    <property type="match status" value="8"/>
</dbReference>
<dbReference type="Pfam" id="PF01826">
    <property type="entry name" value="TIL"/>
    <property type="match status" value="11"/>
</dbReference>
<dbReference type="Pfam" id="PF00090">
    <property type="entry name" value="TSP_1"/>
    <property type="match status" value="22"/>
</dbReference>
<dbReference type="Pfam" id="PF00093">
    <property type="entry name" value="VWC"/>
    <property type="match status" value="1"/>
</dbReference>
<dbReference type="Pfam" id="PF00094">
    <property type="entry name" value="VWD"/>
    <property type="match status" value="3"/>
</dbReference>
<dbReference type="Pfam" id="PF23244">
    <property type="entry name" value="VWF"/>
    <property type="match status" value="1"/>
</dbReference>
<dbReference type="PRINTS" id="PR00261">
    <property type="entry name" value="LDLRECEPTOR"/>
</dbReference>
<dbReference type="SMART" id="SM00832">
    <property type="entry name" value="C8"/>
    <property type="match status" value="3"/>
</dbReference>
<dbReference type="SMART" id="SM00041">
    <property type="entry name" value="CT"/>
    <property type="match status" value="1"/>
</dbReference>
<dbReference type="SMART" id="SM00231">
    <property type="entry name" value="FA58C"/>
    <property type="match status" value="1"/>
</dbReference>
<dbReference type="SMART" id="SM00192">
    <property type="entry name" value="LDLa"/>
    <property type="match status" value="10"/>
</dbReference>
<dbReference type="SMART" id="SM00209">
    <property type="entry name" value="TSP1"/>
    <property type="match status" value="25"/>
</dbReference>
<dbReference type="SMART" id="SM00214">
    <property type="entry name" value="VWC"/>
    <property type="match status" value="5"/>
</dbReference>
<dbReference type="SMART" id="SM00215">
    <property type="entry name" value="VWC_out"/>
    <property type="match status" value="9"/>
</dbReference>
<dbReference type="SMART" id="SM00216">
    <property type="entry name" value="VWD"/>
    <property type="match status" value="3"/>
</dbReference>
<dbReference type="SUPFAM" id="SSF57603">
    <property type="entry name" value="FnI-like domain"/>
    <property type="match status" value="4"/>
</dbReference>
<dbReference type="SUPFAM" id="SSF49785">
    <property type="entry name" value="Galactose-binding domain-like"/>
    <property type="match status" value="1"/>
</dbReference>
<dbReference type="SUPFAM" id="SSF57424">
    <property type="entry name" value="LDL receptor-like module"/>
    <property type="match status" value="9"/>
</dbReference>
<dbReference type="SUPFAM" id="SSF57283">
    <property type="entry name" value="PMP inhibitors"/>
    <property type="match status" value="1"/>
</dbReference>
<dbReference type="SUPFAM" id="SSF57567">
    <property type="entry name" value="Serine protease inhibitors"/>
    <property type="match status" value="14"/>
</dbReference>
<dbReference type="SUPFAM" id="SSF82895">
    <property type="entry name" value="TSP-1 type 1 repeat"/>
    <property type="match status" value="24"/>
</dbReference>
<dbReference type="PROSITE" id="PS01225">
    <property type="entry name" value="CTCK_2"/>
    <property type="match status" value="1"/>
</dbReference>
<dbReference type="PROSITE" id="PS01285">
    <property type="entry name" value="FA58C_1"/>
    <property type="match status" value="1"/>
</dbReference>
<dbReference type="PROSITE" id="PS01286">
    <property type="entry name" value="FA58C_2"/>
    <property type="match status" value="1"/>
</dbReference>
<dbReference type="PROSITE" id="PS50022">
    <property type="entry name" value="FA58C_3"/>
    <property type="match status" value="1"/>
</dbReference>
<dbReference type="PROSITE" id="PS01209">
    <property type="entry name" value="LDLRA_1"/>
    <property type="match status" value="7"/>
</dbReference>
<dbReference type="PROSITE" id="PS50068">
    <property type="entry name" value="LDLRA_2"/>
    <property type="match status" value="9"/>
</dbReference>
<dbReference type="PROSITE" id="PS50092">
    <property type="entry name" value="TSP1"/>
    <property type="match status" value="25"/>
</dbReference>
<dbReference type="PROSITE" id="PS01208">
    <property type="entry name" value="VWFC_1"/>
    <property type="match status" value="1"/>
</dbReference>
<dbReference type="PROSITE" id="PS50184">
    <property type="entry name" value="VWFC_2"/>
    <property type="match status" value="2"/>
</dbReference>
<dbReference type="PROSITE" id="PS51233">
    <property type="entry name" value="VWFD"/>
    <property type="match status" value="3"/>
</dbReference>
<organism>
    <name type="scientific">Bos taurus</name>
    <name type="common">Bovine</name>
    <dbReference type="NCBI Taxonomy" id="9913"/>
    <lineage>
        <taxon>Eukaryota</taxon>
        <taxon>Metazoa</taxon>
        <taxon>Chordata</taxon>
        <taxon>Craniata</taxon>
        <taxon>Vertebrata</taxon>
        <taxon>Euteleostomi</taxon>
        <taxon>Mammalia</taxon>
        <taxon>Eutheria</taxon>
        <taxon>Laurasiatheria</taxon>
        <taxon>Artiodactyla</taxon>
        <taxon>Ruminantia</taxon>
        <taxon>Pecora</taxon>
        <taxon>Bovidae</taxon>
        <taxon>Bovinae</taxon>
        <taxon>Bos</taxon>
    </lineage>
</organism>